<gene>
    <name type="primary">moaE</name>
    <name type="ordered locus">Sca_1759</name>
</gene>
<name>MOAE_STACT</name>
<keyword id="KW-0501">Molybdenum cofactor biosynthesis</keyword>
<keyword id="KW-1185">Reference proteome</keyword>
<keyword id="KW-0808">Transferase</keyword>
<organism>
    <name type="scientific">Staphylococcus carnosus (strain TM300)</name>
    <dbReference type="NCBI Taxonomy" id="396513"/>
    <lineage>
        <taxon>Bacteria</taxon>
        <taxon>Bacillati</taxon>
        <taxon>Bacillota</taxon>
        <taxon>Bacilli</taxon>
        <taxon>Bacillales</taxon>
        <taxon>Staphylococcaceae</taxon>
        <taxon>Staphylococcus</taxon>
    </lineage>
</organism>
<proteinExistence type="inferred from homology"/>
<dbReference type="EC" id="2.8.1.12"/>
<dbReference type="EMBL" id="AF109295">
    <property type="protein sequence ID" value="AAC83141.1"/>
    <property type="molecule type" value="Genomic_DNA"/>
</dbReference>
<dbReference type="EMBL" id="AM295250">
    <property type="protein sequence ID" value="CAL28665.1"/>
    <property type="molecule type" value="Genomic_DNA"/>
</dbReference>
<dbReference type="RefSeq" id="WP_015901001.1">
    <property type="nucleotide sequence ID" value="NC_012121.1"/>
</dbReference>
<dbReference type="SMR" id="Q9ZIM9"/>
<dbReference type="KEGG" id="sca:SCA_1759"/>
<dbReference type="eggNOG" id="COG0314">
    <property type="taxonomic scope" value="Bacteria"/>
</dbReference>
<dbReference type="HOGENOM" id="CLU_089568_1_2_9"/>
<dbReference type="OrthoDB" id="9803224at2"/>
<dbReference type="BioCyc" id="SCAR396513:SCA_RS08955-MONOMER"/>
<dbReference type="UniPathway" id="UPA00344"/>
<dbReference type="Proteomes" id="UP000000444">
    <property type="component" value="Chromosome"/>
</dbReference>
<dbReference type="GO" id="GO:0030366">
    <property type="term" value="F:molybdopterin synthase activity"/>
    <property type="evidence" value="ECO:0007669"/>
    <property type="project" value="UniProtKB-EC"/>
</dbReference>
<dbReference type="GO" id="GO:0006777">
    <property type="term" value="P:Mo-molybdopterin cofactor biosynthetic process"/>
    <property type="evidence" value="ECO:0007669"/>
    <property type="project" value="UniProtKB-KW"/>
</dbReference>
<dbReference type="CDD" id="cd00756">
    <property type="entry name" value="MoaE"/>
    <property type="match status" value="1"/>
</dbReference>
<dbReference type="FunFam" id="3.90.1170.40:FF:000003">
    <property type="entry name" value="Molybdopterin converting factor subunit 2"/>
    <property type="match status" value="1"/>
</dbReference>
<dbReference type="Gene3D" id="3.90.1170.40">
    <property type="entry name" value="Molybdopterin biosynthesis MoaE subunit"/>
    <property type="match status" value="1"/>
</dbReference>
<dbReference type="InterPro" id="IPR036563">
    <property type="entry name" value="MoaE_sf"/>
</dbReference>
<dbReference type="InterPro" id="IPR003448">
    <property type="entry name" value="Mopterin_biosynth_MoaE"/>
</dbReference>
<dbReference type="PANTHER" id="PTHR23404">
    <property type="entry name" value="MOLYBDOPTERIN SYNTHASE RELATED"/>
    <property type="match status" value="1"/>
</dbReference>
<dbReference type="Pfam" id="PF02391">
    <property type="entry name" value="MoaE"/>
    <property type="match status" value="1"/>
</dbReference>
<dbReference type="SUPFAM" id="SSF54690">
    <property type="entry name" value="Molybdopterin synthase subunit MoaE"/>
    <property type="match status" value="1"/>
</dbReference>
<comment type="function">
    <text evidence="1">Converts molybdopterin precursor Z into molybdopterin. This requires the incorporation of two sulfur atoms into precursor Z to generate a dithiolene group. The sulfur is provided by MoaD (By similarity).</text>
</comment>
<comment type="catalytic activity">
    <reaction>
        <text>2 [molybdopterin-synthase sulfur-carrier protein]-C-terminal-Gly-aminoethanethioate + cyclic pyranopterin phosphate + H2O = molybdopterin + 2 [molybdopterin-synthase sulfur-carrier protein]-C-terminal Gly-Gly + 2 H(+)</text>
        <dbReference type="Rhea" id="RHEA:26333"/>
        <dbReference type="Rhea" id="RHEA-COMP:12202"/>
        <dbReference type="Rhea" id="RHEA-COMP:19907"/>
        <dbReference type="ChEBI" id="CHEBI:15377"/>
        <dbReference type="ChEBI" id="CHEBI:15378"/>
        <dbReference type="ChEBI" id="CHEBI:58698"/>
        <dbReference type="ChEBI" id="CHEBI:59648"/>
        <dbReference type="ChEBI" id="CHEBI:90778"/>
        <dbReference type="ChEBI" id="CHEBI:232372"/>
        <dbReference type="EC" id="2.8.1.12"/>
    </reaction>
</comment>
<comment type="pathway">
    <text>Cofactor biosynthesis; molybdopterin biosynthesis.</text>
</comment>
<comment type="subunit">
    <text evidence="1">Heterotetramer of 2 MoaD subunits and 2 MoaE subunits. Also stable as homodimer. The enzyme changes between these two forms during catalysis (By similarity).</text>
</comment>
<comment type="similarity">
    <text evidence="2">Belongs to the MoaE family.</text>
</comment>
<reference key="1">
    <citation type="journal article" date="1998" name="FEMS Microbiol. Lett.">
        <title>Characterization of moeB- part of the molybdenum cofactor biosynthesis gene cluster in Staphylococcus carnosus.</title>
        <authorList>
            <person name="Neubauer H."/>
            <person name="Pantel I."/>
            <person name="Goetz F."/>
        </authorList>
    </citation>
    <scope>NUCLEOTIDE SEQUENCE [GENOMIC DNA]</scope>
</reference>
<reference key="2">
    <citation type="journal article" date="2009" name="Appl. Environ. Microbiol.">
        <title>Genome analysis of the meat starter culture bacterium Staphylococcus carnosus TM300.</title>
        <authorList>
            <person name="Rosenstein R."/>
            <person name="Nerz C."/>
            <person name="Biswas L."/>
            <person name="Resch A."/>
            <person name="Raddatz G."/>
            <person name="Schuster S.C."/>
            <person name="Goetz F."/>
        </authorList>
    </citation>
    <scope>NUCLEOTIDE SEQUENCE [LARGE SCALE GENOMIC DNA]</scope>
    <source>
        <strain>TM300</strain>
    </source>
</reference>
<protein>
    <recommendedName>
        <fullName>Molybdopterin synthase catalytic subunit</fullName>
        <ecNumber>2.8.1.12</ecNumber>
    </recommendedName>
    <alternativeName>
        <fullName>MPT synthase subunit 2</fullName>
    </alternativeName>
    <alternativeName>
        <fullName>Molybdenum cofactor biosynthesis protein E</fullName>
    </alternativeName>
    <alternativeName>
        <fullName>Molybdopterin-converting factor large subunit</fullName>
    </alternativeName>
    <alternativeName>
        <fullName>Molybdopterin-converting factor subunit 2</fullName>
    </alternativeName>
</protein>
<feature type="chain" id="PRO_0000163103" description="Molybdopterin synthase catalytic subunit">
    <location>
        <begin position="1"/>
        <end position="150"/>
    </location>
</feature>
<feature type="binding site" evidence="1">
    <location>
        <begin position="34"/>
        <end position="36"/>
    </location>
    <ligand>
        <name>substrate</name>
    </ligand>
</feature>
<feature type="binding site" evidence="1">
    <location>
        <position position="44"/>
    </location>
    <ligand>
        <name>substrate</name>
    </ligand>
</feature>
<feature type="binding site" evidence="1">
    <location>
        <begin position="100"/>
        <end position="101"/>
    </location>
    <ligand>
        <name>substrate</name>
    </ligand>
</feature>
<feature type="binding site" evidence="1">
    <location>
        <position position="116"/>
    </location>
    <ligand>
        <name>substrate</name>
    </ligand>
</feature>
<feature type="binding site" evidence="1">
    <location>
        <begin position="123"/>
        <end position="125"/>
    </location>
    <ligand>
        <name>substrate</name>
    </ligand>
</feature>
<sequence>MKQFEIVTEPIQTEQHRDFTLNPHQGAVVVFTGHVREWTKGIRTEHLEYEAYIPMAEKKLAQIGDEINEQWPGTIVSIVHRIGPLKISDIAVLIAVSSPHRKDAYAANEYAIDRIKEVVPIWKKEIWEDGAEWIGHQRGYHDDAVERGQN</sequence>
<evidence type="ECO:0000250" key="1"/>
<evidence type="ECO:0000305" key="2"/>
<accession>Q9ZIM9</accession>
<accession>B9DLY5</accession>